<accession>A9MX84</accession>
<dbReference type="EC" id="3.6.-.-" evidence="1"/>
<dbReference type="EMBL" id="CP000886">
    <property type="protein sequence ID" value="ABX70095.1"/>
    <property type="status" value="ALT_INIT"/>
    <property type="molecule type" value="Genomic_DNA"/>
</dbReference>
<dbReference type="RefSeq" id="WP_000019081.1">
    <property type="nucleotide sequence ID" value="NC_010102.1"/>
</dbReference>
<dbReference type="SMR" id="A9MX84"/>
<dbReference type="KEGG" id="spq:SPAB_04784"/>
<dbReference type="PATRIC" id="fig|1016998.12.peg.4500"/>
<dbReference type="HOGENOM" id="CLU_019624_4_1_6"/>
<dbReference type="BioCyc" id="SENT1016998:SPAB_RS19420-MONOMER"/>
<dbReference type="Proteomes" id="UP000008556">
    <property type="component" value="Chromosome"/>
</dbReference>
<dbReference type="GO" id="GO:0005829">
    <property type="term" value="C:cytosol"/>
    <property type="evidence" value="ECO:0007669"/>
    <property type="project" value="TreeGrafter"/>
</dbReference>
<dbReference type="GO" id="GO:0005525">
    <property type="term" value="F:GTP binding"/>
    <property type="evidence" value="ECO:0007669"/>
    <property type="project" value="UniProtKB-UniRule"/>
</dbReference>
<dbReference type="GO" id="GO:0003924">
    <property type="term" value="F:GTPase activity"/>
    <property type="evidence" value="ECO:0007669"/>
    <property type="project" value="UniProtKB-UniRule"/>
</dbReference>
<dbReference type="GO" id="GO:0046872">
    <property type="term" value="F:metal ion binding"/>
    <property type="evidence" value="ECO:0007669"/>
    <property type="project" value="UniProtKB-KW"/>
</dbReference>
<dbReference type="GO" id="GO:0030488">
    <property type="term" value="P:tRNA methylation"/>
    <property type="evidence" value="ECO:0007669"/>
    <property type="project" value="TreeGrafter"/>
</dbReference>
<dbReference type="GO" id="GO:0002098">
    <property type="term" value="P:tRNA wobble uridine modification"/>
    <property type="evidence" value="ECO:0007669"/>
    <property type="project" value="TreeGrafter"/>
</dbReference>
<dbReference type="CDD" id="cd04164">
    <property type="entry name" value="trmE"/>
    <property type="match status" value="1"/>
</dbReference>
<dbReference type="CDD" id="cd14858">
    <property type="entry name" value="TrmE_N"/>
    <property type="match status" value="1"/>
</dbReference>
<dbReference type="FunFam" id="3.30.1360.120:FF:000001">
    <property type="entry name" value="tRNA modification GTPase MnmE"/>
    <property type="match status" value="1"/>
</dbReference>
<dbReference type="FunFam" id="3.40.50.300:FF:000249">
    <property type="entry name" value="tRNA modification GTPase MnmE"/>
    <property type="match status" value="1"/>
</dbReference>
<dbReference type="Gene3D" id="3.40.50.300">
    <property type="entry name" value="P-loop containing nucleotide triphosphate hydrolases"/>
    <property type="match status" value="1"/>
</dbReference>
<dbReference type="Gene3D" id="3.30.1360.120">
    <property type="entry name" value="Probable tRNA modification gtpase trme, domain 1"/>
    <property type="match status" value="1"/>
</dbReference>
<dbReference type="Gene3D" id="1.20.120.430">
    <property type="entry name" value="tRNA modification GTPase MnmE domain 2"/>
    <property type="match status" value="1"/>
</dbReference>
<dbReference type="HAMAP" id="MF_00379">
    <property type="entry name" value="GTPase_MnmE"/>
    <property type="match status" value="1"/>
</dbReference>
<dbReference type="InterPro" id="IPR031168">
    <property type="entry name" value="G_TrmE"/>
</dbReference>
<dbReference type="InterPro" id="IPR006073">
    <property type="entry name" value="GTP-bd"/>
</dbReference>
<dbReference type="InterPro" id="IPR018948">
    <property type="entry name" value="GTP-bd_TrmE_N"/>
</dbReference>
<dbReference type="InterPro" id="IPR004520">
    <property type="entry name" value="GTPase_MnmE"/>
</dbReference>
<dbReference type="InterPro" id="IPR027368">
    <property type="entry name" value="MnmE_dom2"/>
</dbReference>
<dbReference type="InterPro" id="IPR025867">
    <property type="entry name" value="MnmE_helical"/>
</dbReference>
<dbReference type="InterPro" id="IPR027417">
    <property type="entry name" value="P-loop_NTPase"/>
</dbReference>
<dbReference type="InterPro" id="IPR005225">
    <property type="entry name" value="Small_GTP-bd"/>
</dbReference>
<dbReference type="InterPro" id="IPR027266">
    <property type="entry name" value="TrmE/GcvT_dom1"/>
</dbReference>
<dbReference type="NCBIfam" id="TIGR00450">
    <property type="entry name" value="mnmE_trmE_thdF"/>
    <property type="match status" value="1"/>
</dbReference>
<dbReference type="NCBIfam" id="NF003661">
    <property type="entry name" value="PRK05291.1-3"/>
    <property type="match status" value="1"/>
</dbReference>
<dbReference type="NCBIfam" id="TIGR00231">
    <property type="entry name" value="small_GTP"/>
    <property type="match status" value="1"/>
</dbReference>
<dbReference type="PANTHER" id="PTHR42714">
    <property type="entry name" value="TRNA MODIFICATION GTPASE GTPBP3"/>
    <property type="match status" value="1"/>
</dbReference>
<dbReference type="PANTHER" id="PTHR42714:SF2">
    <property type="entry name" value="TRNA MODIFICATION GTPASE GTPBP3, MITOCHONDRIAL"/>
    <property type="match status" value="1"/>
</dbReference>
<dbReference type="Pfam" id="PF01926">
    <property type="entry name" value="MMR_HSR1"/>
    <property type="match status" value="1"/>
</dbReference>
<dbReference type="Pfam" id="PF12631">
    <property type="entry name" value="MnmE_helical"/>
    <property type="match status" value="1"/>
</dbReference>
<dbReference type="Pfam" id="PF10396">
    <property type="entry name" value="TrmE_N"/>
    <property type="match status" value="1"/>
</dbReference>
<dbReference type="SUPFAM" id="SSF52540">
    <property type="entry name" value="P-loop containing nucleoside triphosphate hydrolases"/>
    <property type="match status" value="1"/>
</dbReference>
<dbReference type="SUPFAM" id="SSF116878">
    <property type="entry name" value="TrmE connector domain"/>
    <property type="match status" value="1"/>
</dbReference>
<dbReference type="PROSITE" id="PS51709">
    <property type="entry name" value="G_TRME"/>
    <property type="match status" value="1"/>
</dbReference>
<reference key="1">
    <citation type="submission" date="2007-11" db="EMBL/GenBank/DDBJ databases">
        <authorList>
            <consortium name="The Salmonella enterica serovar Paratyphi B Genome Sequencing Project"/>
            <person name="McClelland M."/>
            <person name="Sanderson E.K."/>
            <person name="Porwollik S."/>
            <person name="Spieth J."/>
            <person name="Clifton W.S."/>
            <person name="Fulton R."/>
            <person name="Cordes M."/>
            <person name="Wollam A."/>
            <person name="Shah N."/>
            <person name="Pepin K."/>
            <person name="Bhonagiri V."/>
            <person name="Nash W."/>
            <person name="Johnson M."/>
            <person name="Thiruvilangam P."/>
            <person name="Wilson R."/>
        </authorList>
    </citation>
    <scope>NUCLEOTIDE SEQUENCE [LARGE SCALE GENOMIC DNA]</scope>
    <source>
        <strain>ATCC BAA-1250 / SPB7</strain>
    </source>
</reference>
<evidence type="ECO:0000255" key="1">
    <source>
        <dbReference type="HAMAP-Rule" id="MF_00379"/>
    </source>
</evidence>
<evidence type="ECO:0000305" key="2"/>
<name>MNME_SALPB</name>
<sequence length="454" mass="49092">MSHNDTIVAQATPPGRGGVGILRISGLKARDVAQEVLGKLPKPRYADYLPFKDVDGSALDQGIALWFPGPNSFTGEDVLELQGHGGPVILDLLLKRILTLPGVRIARPGEFSERAFLNDKLDLAQAEAIADLIDASSEQAARSALNSLQGAFSARVNHLVEALTHLRIYVEAAIDFPDEEIDFLSDGKIEAQLNGVIADLDAVRTEARQGSLLREGMKVVIAGRPNAGKSSLLNALAGREAAIVTDIAGTTRDVLREHIHIDGMPLHIIDTAGLRDASDEVERIGIERAWQEIEQADRVLFMVDGTTTDAVDPADIWPDFIARLPKNLPITVVRNKADITGETLGISEVNGHSLVRLSARTGEGVDVLRNHLKQSMGFDTNMEGGFLARRRHLQALAEAAEHLEQGKAQLLGAWAGELLAEELRLAQQSLSEITGEFTSDDLLGRIFSSFCIGK</sequence>
<comment type="function">
    <text evidence="1">Exhibits a very high intrinsic GTPase hydrolysis rate. Involved in the addition of a carboxymethylaminomethyl (cmnm) group at the wobble position (U34) of certain tRNAs, forming tRNA-cmnm(5)s(2)U34.</text>
</comment>
<comment type="cofactor">
    <cofactor evidence="1">
        <name>K(+)</name>
        <dbReference type="ChEBI" id="CHEBI:29103"/>
    </cofactor>
    <text evidence="1">Binds 1 potassium ion per subunit.</text>
</comment>
<comment type="subunit">
    <text evidence="1">Homodimer. Heterotetramer of two MnmE and two MnmG subunits.</text>
</comment>
<comment type="subcellular location">
    <subcellularLocation>
        <location evidence="1">Cytoplasm</location>
    </subcellularLocation>
</comment>
<comment type="similarity">
    <text evidence="1">Belongs to the TRAFAC class TrmE-Era-EngA-EngB-Septin-like GTPase superfamily. TrmE GTPase family.</text>
</comment>
<comment type="sequence caution" evidence="2">
    <conflict type="erroneous initiation">
        <sequence resource="EMBL-CDS" id="ABX70095"/>
    </conflict>
</comment>
<proteinExistence type="inferred from homology"/>
<feature type="chain" id="PRO_0000345901" description="tRNA modification GTPase MnmE">
    <location>
        <begin position="1"/>
        <end position="454"/>
    </location>
</feature>
<feature type="domain" description="TrmE-type G">
    <location>
        <begin position="216"/>
        <end position="377"/>
    </location>
</feature>
<feature type="binding site" evidence="1">
    <location>
        <position position="23"/>
    </location>
    <ligand>
        <name>(6S)-5-formyl-5,6,7,8-tetrahydrofolate</name>
        <dbReference type="ChEBI" id="CHEBI:57457"/>
    </ligand>
</feature>
<feature type="binding site" evidence="1">
    <location>
        <position position="80"/>
    </location>
    <ligand>
        <name>(6S)-5-formyl-5,6,7,8-tetrahydrofolate</name>
        <dbReference type="ChEBI" id="CHEBI:57457"/>
    </ligand>
</feature>
<feature type="binding site" evidence="1">
    <location>
        <position position="120"/>
    </location>
    <ligand>
        <name>(6S)-5-formyl-5,6,7,8-tetrahydrofolate</name>
        <dbReference type="ChEBI" id="CHEBI:57457"/>
    </ligand>
</feature>
<feature type="binding site" evidence="1">
    <location>
        <begin position="226"/>
        <end position="231"/>
    </location>
    <ligand>
        <name>GTP</name>
        <dbReference type="ChEBI" id="CHEBI:37565"/>
    </ligand>
</feature>
<feature type="binding site" evidence="1">
    <location>
        <position position="226"/>
    </location>
    <ligand>
        <name>K(+)</name>
        <dbReference type="ChEBI" id="CHEBI:29103"/>
    </ligand>
</feature>
<feature type="binding site" evidence="1">
    <location>
        <position position="230"/>
    </location>
    <ligand>
        <name>Mg(2+)</name>
        <dbReference type="ChEBI" id="CHEBI:18420"/>
    </ligand>
</feature>
<feature type="binding site" evidence="1">
    <location>
        <begin position="245"/>
        <end position="251"/>
    </location>
    <ligand>
        <name>GTP</name>
        <dbReference type="ChEBI" id="CHEBI:37565"/>
    </ligand>
</feature>
<feature type="binding site" evidence="1">
    <location>
        <position position="245"/>
    </location>
    <ligand>
        <name>K(+)</name>
        <dbReference type="ChEBI" id="CHEBI:29103"/>
    </ligand>
</feature>
<feature type="binding site" evidence="1">
    <location>
        <position position="247"/>
    </location>
    <ligand>
        <name>K(+)</name>
        <dbReference type="ChEBI" id="CHEBI:29103"/>
    </ligand>
</feature>
<feature type="binding site" evidence="1">
    <location>
        <position position="250"/>
    </location>
    <ligand>
        <name>K(+)</name>
        <dbReference type="ChEBI" id="CHEBI:29103"/>
    </ligand>
</feature>
<feature type="binding site" evidence="1">
    <location>
        <position position="251"/>
    </location>
    <ligand>
        <name>Mg(2+)</name>
        <dbReference type="ChEBI" id="CHEBI:18420"/>
    </ligand>
</feature>
<feature type="binding site" evidence="1">
    <location>
        <begin position="270"/>
        <end position="273"/>
    </location>
    <ligand>
        <name>GTP</name>
        <dbReference type="ChEBI" id="CHEBI:37565"/>
    </ligand>
</feature>
<feature type="binding site" evidence="1">
    <location>
        <begin position="335"/>
        <end position="338"/>
    </location>
    <ligand>
        <name>GTP</name>
        <dbReference type="ChEBI" id="CHEBI:37565"/>
    </ligand>
</feature>
<feature type="binding site" evidence="1">
    <location>
        <begin position="358"/>
        <end position="360"/>
    </location>
    <ligand>
        <name>GTP</name>
        <dbReference type="ChEBI" id="CHEBI:37565"/>
    </ligand>
</feature>
<feature type="binding site" evidence="1">
    <location>
        <position position="454"/>
    </location>
    <ligand>
        <name>(6S)-5-formyl-5,6,7,8-tetrahydrofolate</name>
        <dbReference type="ChEBI" id="CHEBI:57457"/>
    </ligand>
</feature>
<organism>
    <name type="scientific">Salmonella paratyphi B (strain ATCC BAA-1250 / SPB7)</name>
    <dbReference type="NCBI Taxonomy" id="1016998"/>
    <lineage>
        <taxon>Bacteria</taxon>
        <taxon>Pseudomonadati</taxon>
        <taxon>Pseudomonadota</taxon>
        <taxon>Gammaproteobacteria</taxon>
        <taxon>Enterobacterales</taxon>
        <taxon>Enterobacteriaceae</taxon>
        <taxon>Salmonella</taxon>
    </lineage>
</organism>
<protein>
    <recommendedName>
        <fullName evidence="1">tRNA modification GTPase MnmE</fullName>
        <ecNumber evidence="1">3.6.-.-</ecNumber>
    </recommendedName>
</protein>
<keyword id="KW-0963">Cytoplasm</keyword>
<keyword id="KW-0342">GTP-binding</keyword>
<keyword id="KW-0378">Hydrolase</keyword>
<keyword id="KW-0460">Magnesium</keyword>
<keyword id="KW-0479">Metal-binding</keyword>
<keyword id="KW-0547">Nucleotide-binding</keyword>
<keyword id="KW-0630">Potassium</keyword>
<keyword id="KW-0819">tRNA processing</keyword>
<gene>
    <name evidence="1" type="primary">mnmE</name>
    <name evidence="1" type="synonym">trmE</name>
    <name type="ordered locus">SPAB_04784</name>
</gene>